<evidence type="ECO:0000255" key="1">
    <source>
        <dbReference type="HAMAP-Rule" id="MF_00183"/>
    </source>
</evidence>
<feature type="chain" id="PRO_1000098473" description="1-deoxy-D-xylulose 5-phosphate reductoisomerase">
    <location>
        <begin position="1"/>
        <end position="396"/>
    </location>
</feature>
<feature type="binding site" evidence="1">
    <location>
        <position position="15"/>
    </location>
    <ligand>
        <name>NADPH</name>
        <dbReference type="ChEBI" id="CHEBI:57783"/>
    </ligand>
</feature>
<feature type="binding site" evidence="1">
    <location>
        <position position="16"/>
    </location>
    <ligand>
        <name>NADPH</name>
        <dbReference type="ChEBI" id="CHEBI:57783"/>
    </ligand>
</feature>
<feature type="binding site" evidence="1">
    <location>
        <position position="17"/>
    </location>
    <ligand>
        <name>NADPH</name>
        <dbReference type="ChEBI" id="CHEBI:57783"/>
    </ligand>
</feature>
<feature type="binding site" evidence="1">
    <location>
        <position position="18"/>
    </location>
    <ligand>
        <name>NADPH</name>
        <dbReference type="ChEBI" id="CHEBI:57783"/>
    </ligand>
</feature>
<feature type="binding site" evidence="1">
    <location>
        <position position="41"/>
    </location>
    <ligand>
        <name>NADPH</name>
        <dbReference type="ChEBI" id="CHEBI:57783"/>
    </ligand>
</feature>
<feature type="binding site" evidence="1">
    <location>
        <position position="130"/>
    </location>
    <ligand>
        <name>NADPH</name>
        <dbReference type="ChEBI" id="CHEBI:57783"/>
    </ligand>
</feature>
<feature type="binding site" evidence="1">
    <location>
        <position position="131"/>
    </location>
    <ligand>
        <name>1-deoxy-D-xylulose 5-phosphate</name>
        <dbReference type="ChEBI" id="CHEBI:57792"/>
    </ligand>
</feature>
<feature type="binding site" evidence="1">
    <location>
        <position position="132"/>
    </location>
    <ligand>
        <name>NADPH</name>
        <dbReference type="ChEBI" id="CHEBI:57783"/>
    </ligand>
</feature>
<feature type="binding site" evidence="1">
    <location>
        <position position="155"/>
    </location>
    <ligand>
        <name>Mn(2+)</name>
        <dbReference type="ChEBI" id="CHEBI:29035"/>
    </ligand>
</feature>
<feature type="binding site" evidence="1">
    <location>
        <position position="156"/>
    </location>
    <ligand>
        <name>1-deoxy-D-xylulose 5-phosphate</name>
        <dbReference type="ChEBI" id="CHEBI:57792"/>
    </ligand>
</feature>
<feature type="binding site" evidence="1">
    <location>
        <position position="157"/>
    </location>
    <ligand>
        <name>1-deoxy-D-xylulose 5-phosphate</name>
        <dbReference type="ChEBI" id="CHEBI:57792"/>
    </ligand>
</feature>
<feature type="binding site" evidence="1">
    <location>
        <position position="157"/>
    </location>
    <ligand>
        <name>Mn(2+)</name>
        <dbReference type="ChEBI" id="CHEBI:29035"/>
    </ligand>
</feature>
<feature type="binding site" evidence="1">
    <location>
        <position position="181"/>
    </location>
    <ligand>
        <name>1-deoxy-D-xylulose 5-phosphate</name>
        <dbReference type="ChEBI" id="CHEBI:57792"/>
    </ligand>
</feature>
<feature type="binding site" evidence="1">
    <location>
        <position position="204"/>
    </location>
    <ligand>
        <name>1-deoxy-D-xylulose 5-phosphate</name>
        <dbReference type="ChEBI" id="CHEBI:57792"/>
    </ligand>
</feature>
<feature type="binding site" evidence="1">
    <location>
        <position position="210"/>
    </location>
    <ligand>
        <name>NADPH</name>
        <dbReference type="ChEBI" id="CHEBI:57783"/>
    </ligand>
</feature>
<feature type="binding site" evidence="1">
    <location>
        <position position="217"/>
    </location>
    <ligand>
        <name>1-deoxy-D-xylulose 5-phosphate</name>
        <dbReference type="ChEBI" id="CHEBI:57792"/>
    </ligand>
</feature>
<feature type="binding site" evidence="1">
    <location>
        <position position="222"/>
    </location>
    <ligand>
        <name>1-deoxy-D-xylulose 5-phosphate</name>
        <dbReference type="ChEBI" id="CHEBI:57792"/>
    </ligand>
</feature>
<feature type="binding site" evidence="1">
    <location>
        <position position="223"/>
    </location>
    <ligand>
        <name>1-deoxy-D-xylulose 5-phosphate</name>
        <dbReference type="ChEBI" id="CHEBI:57792"/>
    </ligand>
</feature>
<feature type="binding site" evidence="1">
    <location>
        <position position="226"/>
    </location>
    <ligand>
        <name>1-deoxy-D-xylulose 5-phosphate</name>
        <dbReference type="ChEBI" id="CHEBI:57792"/>
    </ligand>
</feature>
<feature type="binding site" evidence="1">
    <location>
        <position position="226"/>
    </location>
    <ligand>
        <name>Mn(2+)</name>
        <dbReference type="ChEBI" id="CHEBI:29035"/>
    </ligand>
</feature>
<sequence length="396" mass="41986">MSIASNSTVIILGSTGSIGTQGLDVISRHPERFTVTGLAAGGAHIELLAQQAAQFHVSEAAVFDETKVPALQAALAQAGAQGVRVTGGPDSVIAMAGSGANVVLNGITGSIGLEPSIAALKAGSQLALANKESVVAGGHLLFSAQVRENQINPVDSEHSAIWQSLRSGTHAEVAKLVVTASGGPFRGWKRADMENITPEQALHHPTWNMGPVVTINSSTLMNKGLEVIEASRLFNVPPERIDVTVHPQSIVHSMVEFVDGATICQASPPDMRLPIALGLSAPDRMTNVAAACDWTQAATWTFEPLDDEAFPAVQLARHCLAASEKHTAVLNAANEQAVHAFLEHRLPYLGIVDTVKAVLDQMDAELRGNPLFTDVEEMNQLELEARRRADDLINKQ</sequence>
<proteinExistence type="inferred from homology"/>
<protein>
    <recommendedName>
        <fullName evidence="1">1-deoxy-D-xylulose 5-phosphate reductoisomerase</fullName>
        <shortName evidence="1">DXP reductoisomerase</shortName>
        <ecNumber evidence="1">1.1.1.267</ecNumber>
    </recommendedName>
    <alternativeName>
        <fullName evidence="1">1-deoxyxylulose-5-phosphate reductoisomerase</fullName>
    </alternativeName>
    <alternativeName>
        <fullName evidence="1">2-C-methyl-D-erythritol 4-phosphate synthase</fullName>
    </alternativeName>
</protein>
<name>DXR_BIFLD</name>
<accession>B3DQ62</accession>
<gene>
    <name evidence="1" type="primary">dxr</name>
    <name type="ordered locus">BLD_0115</name>
</gene>
<dbReference type="EC" id="1.1.1.267" evidence="1"/>
<dbReference type="EMBL" id="CP000605">
    <property type="protein sequence ID" value="ACD97561.1"/>
    <property type="molecule type" value="Genomic_DNA"/>
</dbReference>
<dbReference type="RefSeq" id="WP_007055434.1">
    <property type="nucleotide sequence ID" value="NZ_AABM02000010.1"/>
</dbReference>
<dbReference type="SMR" id="B3DQ62"/>
<dbReference type="KEGG" id="blj:BLD_0115"/>
<dbReference type="HOGENOM" id="CLU_035714_4_0_11"/>
<dbReference type="UniPathway" id="UPA00056">
    <property type="reaction ID" value="UER00092"/>
</dbReference>
<dbReference type="Proteomes" id="UP000002419">
    <property type="component" value="Chromosome"/>
</dbReference>
<dbReference type="GO" id="GO:0030604">
    <property type="term" value="F:1-deoxy-D-xylulose-5-phosphate reductoisomerase activity"/>
    <property type="evidence" value="ECO:0007669"/>
    <property type="project" value="UniProtKB-UniRule"/>
</dbReference>
<dbReference type="GO" id="GO:0030145">
    <property type="term" value="F:manganese ion binding"/>
    <property type="evidence" value="ECO:0007669"/>
    <property type="project" value="TreeGrafter"/>
</dbReference>
<dbReference type="GO" id="GO:0070402">
    <property type="term" value="F:NADPH binding"/>
    <property type="evidence" value="ECO:0007669"/>
    <property type="project" value="InterPro"/>
</dbReference>
<dbReference type="GO" id="GO:0051484">
    <property type="term" value="P:isopentenyl diphosphate biosynthetic process, methylerythritol 4-phosphate pathway involved in terpenoid biosynthetic process"/>
    <property type="evidence" value="ECO:0007669"/>
    <property type="project" value="TreeGrafter"/>
</dbReference>
<dbReference type="FunFam" id="3.40.50.720:FF:000045">
    <property type="entry name" value="1-deoxy-D-xylulose 5-phosphate reductoisomerase"/>
    <property type="match status" value="1"/>
</dbReference>
<dbReference type="Gene3D" id="1.10.1740.10">
    <property type="match status" value="1"/>
</dbReference>
<dbReference type="Gene3D" id="3.40.50.720">
    <property type="entry name" value="NAD(P)-binding Rossmann-like Domain"/>
    <property type="match status" value="1"/>
</dbReference>
<dbReference type="HAMAP" id="MF_00183">
    <property type="entry name" value="DXP_reductoisom"/>
    <property type="match status" value="1"/>
</dbReference>
<dbReference type="InterPro" id="IPR003821">
    <property type="entry name" value="DXP_reductoisomerase"/>
</dbReference>
<dbReference type="InterPro" id="IPR013644">
    <property type="entry name" value="DXP_reductoisomerase_C"/>
</dbReference>
<dbReference type="InterPro" id="IPR013512">
    <property type="entry name" value="DXP_reductoisomerase_N"/>
</dbReference>
<dbReference type="InterPro" id="IPR026877">
    <property type="entry name" value="DXPR_C"/>
</dbReference>
<dbReference type="InterPro" id="IPR036169">
    <property type="entry name" value="DXPR_C_sf"/>
</dbReference>
<dbReference type="InterPro" id="IPR036291">
    <property type="entry name" value="NAD(P)-bd_dom_sf"/>
</dbReference>
<dbReference type="NCBIfam" id="TIGR00243">
    <property type="entry name" value="Dxr"/>
    <property type="match status" value="1"/>
</dbReference>
<dbReference type="PANTHER" id="PTHR30525">
    <property type="entry name" value="1-DEOXY-D-XYLULOSE 5-PHOSPHATE REDUCTOISOMERASE"/>
    <property type="match status" value="1"/>
</dbReference>
<dbReference type="PANTHER" id="PTHR30525:SF0">
    <property type="entry name" value="1-DEOXY-D-XYLULOSE 5-PHOSPHATE REDUCTOISOMERASE, CHLOROPLASTIC"/>
    <property type="match status" value="1"/>
</dbReference>
<dbReference type="Pfam" id="PF08436">
    <property type="entry name" value="DXP_redisom_C"/>
    <property type="match status" value="1"/>
</dbReference>
<dbReference type="Pfam" id="PF02670">
    <property type="entry name" value="DXP_reductoisom"/>
    <property type="match status" value="1"/>
</dbReference>
<dbReference type="Pfam" id="PF13288">
    <property type="entry name" value="DXPR_C"/>
    <property type="match status" value="1"/>
</dbReference>
<dbReference type="PIRSF" id="PIRSF006205">
    <property type="entry name" value="Dxp_reductismrs"/>
    <property type="match status" value="1"/>
</dbReference>
<dbReference type="SUPFAM" id="SSF69055">
    <property type="entry name" value="1-deoxy-D-xylulose-5-phosphate reductoisomerase, C-terminal domain"/>
    <property type="match status" value="1"/>
</dbReference>
<dbReference type="SUPFAM" id="SSF55347">
    <property type="entry name" value="Glyceraldehyde-3-phosphate dehydrogenase-like, C-terminal domain"/>
    <property type="match status" value="1"/>
</dbReference>
<dbReference type="SUPFAM" id="SSF51735">
    <property type="entry name" value="NAD(P)-binding Rossmann-fold domains"/>
    <property type="match status" value="1"/>
</dbReference>
<keyword id="KW-0414">Isoprene biosynthesis</keyword>
<keyword id="KW-0464">Manganese</keyword>
<keyword id="KW-0479">Metal-binding</keyword>
<keyword id="KW-0521">NADP</keyword>
<keyword id="KW-0560">Oxidoreductase</keyword>
<organism>
    <name type="scientific">Bifidobacterium longum (strain DJO10A)</name>
    <dbReference type="NCBI Taxonomy" id="205913"/>
    <lineage>
        <taxon>Bacteria</taxon>
        <taxon>Bacillati</taxon>
        <taxon>Actinomycetota</taxon>
        <taxon>Actinomycetes</taxon>
        <taxon>Bifidobacteriales</taxon>
        <taxon>Bifidobacteriaceae</taxon>
        <taxon>Bifidobacterium</taxon>
    </lineage>
</organism>
<reference key="1">
    <citation type="journal article" date="2008" name="BMC Genomics">
        <title>Comparative genomic analysis of the gut bacterium Bifidobacterium longum reveals loci susceptible to deletion during pure culture growth.</title>
        <authorList>
            <person name="Lee J.H."/>
            <person name="Karamychev V.N."/>
            <person name="Kozyavkin S.A."/>
            <person name="Mills D."/>
            <person name="Pavlov A.R."/>
            <person name="Pavlova N.V."/>
            <person name="Polouchine N.N."/>
            <person name="Richardson P.M."/>
            <person name="Shakhova V.V."/>
            <person name="Slesarev A.I."/>
            <person name="Weimer B."/>
            <person name="O'Sullivan D.J."/>
        </authorList>
    </citation>
    <scope>NUCLEOTIDE SEQUENCE [LARGE SCALE GENOMIC DNA]</scope>
    <source>
        <strain>DJO10A</strain>
    </source>
</reference>
<comment type="function">
    <text evidence="1">Catalyzes the NADPH-dependent rearrangement and reduction of 1-deoxy-D-xylulose-5-phosphate (DXP) to 2-C-methyl-D-erythritol 4-phosphate (MEP).</text>
</comment>
<comment type="catalytic activity">
    <reaction evidence="1">
        <text>2-C-methyl-D-erythritol 4-phosphate + NADP(+) = 1-deoxy-D-xylulose 5-phosphate + NADPH + H(+)</text>
        <dbReference type="Rhea" id="RHEA:13717"/>
        <dbReference type="ChEBI" id="CHEBI:15378"/>
        <dbReference type="ChEBI" id="CHEBI:57783"/>
        <dbReference type="ChEBI" id="CHEBI:57792"/>
        <dbReference type="ChEBI" id="CHEBI:58262"/>
        <dbReference type="ChEBI" id="CHEBI:58349"/>
        <dbReference type="EC" id="1.1.1.267"/>
    </reaction>
    <physiologicalReaction direction="right-to-left" evidence="1">
        <dbReference type="Rhea" id="RHEA:13719"/>
    </physiologicalReaction>
</comment>
<comment type="cofactor">
    <cofactor evidence="1">
        <name>Mg(2+)</name>
        <dbReference type="ChEBI" id="CHEBI:18420"/>
    </cofactor>
    <cofactor evidence="1">
        <name>Mn(2+)</name>
        <dbReference type="ChEBI" id="CHEBI:29035"/>
    </cofactor>
</comment>
<comment type="pathway">
    <text evidence="1">Isoprenoid biosynthesis; isopentenyl diphosphate biosynthesis via DXP pathway; isopentenyl diphosphate from 1-deoxy-D-xylulose 5-phosphate: step 1/6.</text>
</comment>
<comment type="similarity">
    <text evidence="1">Belongs to the DXR family.</text>
</comment>